<reference key="1">
    <citation type="journal article" date="2007" name="PLoS Genet.">
        <title>Patterns and implications of gene gain and loss in the evolution of Prochlorococcus.</title>
        <authorList>
            <person name="Kettler G.C."/>
            <person name="Martiny A.C."/>
            <person name="Huang K."/>
            <person name="Zucker J."/>
            <person name="Coleman M.L."/>
            <person name="Rodrigue S."/>
            <person name="Chen F."/>
            <person name="Lapidus A."/>
            <person name="Ferriera S."/>
            <person name="Johnson J."/>
            <person name="Steglich C."/>
            <person name="Church G.M."/>
            <person name="Richardson P."/>
            <person name="Chisholm S.W."/>
        </authorList>
    </citation>
    <scope>NUCLEOTIDE SEQUENCE [LARGE SCALE GENOMIC DNA]</scope>
    <source>
        <strain>MIT 9303</strain>
    </source>
</reference>
<evidence type="ECO:0000255" key="1">
    <source>
        <dbReference type="HAMAP-Rule" id="MF_01428"/>
    </source>
</evidence>
<accession>A2C764</accession>
<gene>
    <name evidence="1" type="primary">gluQ</name>
    <name type="ordered locus">P9303_05721</name>
</gene>
<sequence>MATSSELPDHLYEQMEAGQRLRNQGYRGRFAPSPTGPLHLGNLCTALVSWLQARLANGAWLLRVDDLDQPRNRVGAVESLQQDLHWLGLDWDGPVVFQSRRRGLYNSFLSALRRQGKLYACRCSRRMLADISAPAGRHLVYPGTCRDLELFWGWHEGRLPSWRLRVSKEFSHTSGDVILRRADGFIAYHLATVVDELTLGISEVVRGEDLLVAMNAQLALINEISARPVIYRHVPLLCDDQGRKLAKREGHAGLDSLRSEGLGPSHVVGWLAASQSLVPFGAELTAGELLSELKKKEGVLKSVLKP</sequence>
<proteinExistence type="inferred from homology"/>
<feature type="chain" id="PRO_1000024360" description="Glutamyl-Q tRNA(Asp) synthetase">
    <location>
        <begin position="1"/>
        <end position="306"/>
    </location>
</feature>
<feature type="short sequence motif" description="'HIGH' region">
    <location>
        <begin position="32"/>
        <end position="42"/>
    </location>
</feature>
<feature type="short sequence motif" description="'KMSKS' region">
    <location>
        <begin position="244"/>
        <end position="248"/>
    </location>
</feature>
<feature type="binding site" evidence="1">
    <location>
        <begin position="29"/>
        <end position="33"/>
    </location>
    <ligand>
        <name>L-glutamate</name>
        <dbReference type="ChEBI" id="CHEBI:29985"/>
    </ligand>
</feature>
<feature type="binding site" evidence="1">
    <location>
        <position position="65"/>
    </location>
    <ligand>
        <name>L-glutamate</name>
        <dbReference type="ChEBI" id="CHEBI:29985"/>
    </ligand>
</feature>
<feature type="binding site" evidence="1">
    <location>
        <position position="121"/>
    </location>
    <ligand>
        <name>Zn(2+)</name>
        <dbReference type="ChEBI" id="CHEBI:29105"/>
    </ligand>
</feature>
<feature type="binding site" evidence="1">
    <location>
        <position position="123"/>
    </location>
    <ligand>
        <name>Zn(2+)</name>
        <dbReference type="ChEBI" id="CHEBI:29105"/>
    </ligand>
</feature>
<feature type="binding site" evidence="1">
    <location>
        <position position="141"/>
    </location>
    <ligand>
        <name>Zn(2+)</name>
        <dbReference type="ChEBI" id="CHEBI:29105"/>
    </ligand>
</feature>
<feature type="binding site" evidence="1">
    <location>
        <position position="145"/>
    </location>
    <ligand>
        <name>Zn(2+)</name>
        <dbReference type="ChEBI" id="CHEBI:29105"/>
    </ligand>
</feature>
<feature type="binding site" evidence="1">
    <location>
        <position position="188"/>
    </location>
    <ligand>
        <name>L-glutamate</name>
        <dbReference type="ChEBI" id="CHEBI:29985"/>
    </ligand>
</feature>
<feature type="binding site" evidence="1">
    <location>
        <position position="206"/>
    </location>
    <ligand>
        <name>L-glutamate</name>
        <dbReference type="ChEBI" id="CHEBI:29985"/>
    </ligand>
</feature>
<feature type="binding site" evidence="1">
    <location>
        <position position="247"/>
    </location>
    <ligand>
        <name>ATP</name>
        <dbReference type="ChEBI" id="CHEBI:30616"/>
    </ligand>
</feature>
<comment type="function">
    <text evidence="1">Catalyzes the tRNA-independent activation of glutamate in presence of ATP and the subsequent transfer of glutamate onto a tRNA(Asp). Glutamate is transferred on the 2-amino-5-(4,5-dihydroxy-2-cyclopenten-1-yl) moiety of the queuosine in the wobble position of the QUC anticodon.</text>
</comment>
<comment type="cofactor">
    <cofactor evidence="1">
        <name>Zn(2+)</name>
        <dbReference type="ChEBI" id="CHEBI:29105"/>
    </cofactor>
    <text evidence="1">Binds 1 zinc ion per subunit.</text>
</comment>
<comment type="similarity">
    <text evidence="1">Belongs to the class-I aminoacyl-tRNA synthetase family. GluQ subfamily.</text>
</comment>
<protein>
    <recommendedName>
        <fullName evidence="1">Glutamyl-Q tRNA(Asp) synthetase</fullName>
        <shortName evidence="1">Glu-Q-RSs</shortName>
        <ecNumber evidence="1">6.1.1.-</ecNumber>
    </recommendedName>
</protein>
<dbReference type="EC" id="6.1.1.-" evidence="1"/>
<dbReference type="EMBL" id="CP000554">
    <property type="protein sequence ID" value="ABM77324.1"/>
    <property type="molecule type" value="Genomic_DNA"/>
</dbReference>
<dbReference type="RefSeq" id="WP_011825244.1">
    <property type="nucleotide sequence ID" value="NC_008820.1"/>
</dbReference>
<dbReference type="SMR" id="A2C764"/>
<dbReference type="STRING" id="59922.P9303_05721"/>
<dbReference type="KEGG" id="pmf:P9303_05721"/>
<dbReference type="HOGENOM" id="CLU_015768_0_0_3"/>
<dbReference type="BioCyc" id="PMAR59922:G1G80-527-MONOMER"/>
<dbReference type="Proteomes" id="UP000002274">
    <property type="component" value="Chromosome"/>
</dbReference>
<dbReference type="GO" id="GO:0005829">
    <property type="term" value="C:cytosol"/>
    <property type="evidence" value="ECO:0007669"/>
    <property type="project" value="TreeGrafter"/>
</dbReference>
<dbReference type="GO" id="GO:0005524">
    <property type="term" value="F:ATP binding"/>
    <property type="evidence" value="ECO:0007669"/>
    <property type="project" value="UniProtKB-KW"/>
</dbReference>
<dbReference type="GO" id="GO:0004818">
    <property type="term" value="F:glutamate-tRNA ligase activity"/>
    <property type="evidence" value="ECO:0007669"/>
    <property type="project" value="TreeGrafter"/>
</dbReference>
<dbReference type="GO" id="GO:0008270">
    <property type="term" value="F:zinc ion binding"/>
    <property type="evidence" value="ECO:0007669"/>
    <property type="project" value="UniProtKB-UniRule"/>
</dbReference>
<dbReference type="GO" id="GO:0006424">
    <property type="term" value="P:glutamyl-tRNA aminoacylation"/>
    <property type="evidence" value="ECO:0007669"/>
    <property type="project" value="InterPro"/>
</dbReference>
<dbReference type="GO" id="GO:0006400">
    <property type="term" value="P:tRNA modification"/>
    <property type="evidence" value="ECO:0007669"/>
    <property type="project" value="InterPro"/>
</dbReference>
<dbReference type="Gene3D" id="3.40.50.620">
    <property type="entry name" value="HUPs"/>
    <property type="match status" value="1"/>
</dbReference>
<dbReference type="HAMAP" id="MF_01428">
    <property type="entry name" value="Glu_Q_tRNA_synth"/>
    <property type="match status" value="1"/>
</dbReference>
<dbReference type="InterPro" id="IPR001412">
    <property type="entry name" value="aa-tRNA-synth_I_CS"/>
</dbReference>
<dbReference type="InterPro" id="IPR022380">
    <property type="entry name" value="Glu-Q_tRNA(Asp)_Synthase"/>
</dbReference>
<dbReference type="InterPro" id="IPR000924">
    <property type="entry name" value="Glu/Gln-tRNA-synth"/>
</dbReference>
<dbReference type="InterPro" id="IPR020058">
    <property type="entry name" value="Glu/Gln-tRNA-synth_Ib_cat-dom"/>
</dbReference>
<dbReference type="InterPro" id="IPR049940">
    <property type="entry name" value="GluQ/Sye"/>
</dbReference>
<dbReference type="InterPro" id="IPR014729">
    <property type="entry name" value="Rossmann-like_a/b/a_fold"/>
</dbReference>
<dbReference type="NCBIfam" id="NF004314">
    <property type="entry name" value="PRK05710.1-3"/>
    <property type="match status" value="1"/>
</dbReference>
<dbReference type="PANTHER" id="PTHR43311">
    <property type="entry name" value="GLUTAMATE--TRNA LIGASE"/>
    <property type="match status" value="1"/>
</dbReference>
<dbReference type="PANTHER" id="PTHR43311:SF1">
    <property type="entry name" value="GLUTAMYL-Q TRNA(ASP) SYNTHETASE"/>
    <property type="match status" value="1"/>
</dbReference>
<dbReference type="Pfam" id="PF00749">
    <property type="entry name" value="tRNA-synt_1c"/>
    <property type="match status" value="2"/>
</dbReference>
<dbReference type="PRINTS" id="PR00987">
    <property type="entry name" value="TRNASYNTHGLU"/>
</dbReference>
<dbReference type="SUPFAM" id="SSF52374">
    <property type="entry name" value="Nucleotidylyl transferase"/>
    <property type="match status" value="1"/>
</dbReference>
<dbReference type="PROSITE" id="PS00178">
    <property type="entry name" value="AA_TRNA_LIGASE_I"/>
    <property type="match status" value="1"/>
</dbReference>
<keyword id="KW-0030">Aminoacyl-tRNA synthetase</keyword>
<keyword id="KW-0067">ATP-binding</keyword>
<keyword id="KW-0436">Ligase</keyword>
<keyword id="KW-0479">Metal-binding</keyword>
<keyword id="KW-0547">Nucleotide-binding</keyword>
<keyword id="KW-0862">Zinc</keyword>
<name>GLUQ_PROM3</name>
<organism>
    <name type="scientific">Prochlorococcus marinus (strain MIT 9303)</name>
    <dbReference type="NCBI Taxonomy" id="59922"/>
    <lineage>
        <taxon>Bacteria</taxon>
        <taxon>Bacillati</taxon>
        <taxon>Cyanobacteriota</taxon>
        <taxon>Cyanophyceae</taxon>
        <taxon>Synechococcales</taxon>
        <taxon>Prochlorococcaceae</taxon>
        <taxon>Prochlorococcus</taxon>
    </lineage>
</organism>